<organism>
    <name type="scientific">Xenopus tropicalis</name>
    <name type="common">Western clawed frog</name>
    <name type="synonym">Silurana tropicalis</name>
    <dbReference type="NCBI Taxonomy" id="8364"/>
    <lineage>
        <taxon>Eukaryota</taxon>
        <taxon>Metazoa</taxon>
        <taxon>Chordata</taxon>
        <taxon>Craniata</taxon>
        <taxon>Vertebrata</taxon>
        <taxon>Euteleostomi</taxon>
        <taxon>Amphibia</taxon>
        <taxon>Batrachia</taxon>
        <taxon>Anura</taxon>
        <taxon>Pipoidea</taxon>
        <taxon>Pipidae</taxon>
        <taxon>Xenopodinae</taxon>
        <taxon>Xenopus</taxon>
        <taxon>Silurana</taxon>
    </lineage>
</organism>
<sequence>MAEDLAKQLAGYKAQLQQVESALTANGENEDLLKLKKDLQEVIELTKDLLSSQPSETADDACDDMSASGSQSWKVGEKCMAVWSDDGQWYEAEIEEIDEENGTAAITFAGYGNAEVTSLLNLRPVEEGRKAKEDSGNLPMSKKEMIAAQREYKKKKALKKAQRIKELEQEREDQKVKWQQFNNKAYSKNKKGQVKRSIFASPESVTGKVGVGTCGIADKPMTQYQDTSKYNVRHLMPQ</sequence>
<keyword id="KW-0507">mRNA processing</keyword>
<keyword id="KW-0508">mRNA splicing</keyword>
<keyword id="KW-0539">Nucleus</keyword>
<keyword id="KW-1185">Reference proteome</keyword>
<keyword id="KW-0747">Spliceosome</keyword>
<name>SPF30_XENTR</name>
<proteinExistence type="evidence at transcript level"/>
<dbReference type="EMBL" id="CR942604">
    <property type="protein sequence ID" value="CAJ83801.1"/>
    <property type="molecule type" value="mRNA"/>
</dbReference>
<dbReference type="EMBL" id="BC076962">
    <property type="protein sequence ID" value="AAH76962.1"/>
    <property type="molecule type" value="mRNA"/>
</dbReference>
<dbReference type="RefSeq" id="NP_001006857.1">
    <property type="nucleotide sequence ID" value="NM_001006856.2"/>
</dbReference>
<dbReference type="SMR" id="Q6DEY1"/>
<dbReference type="FunCoup" id="Q6DEY1">
    <property type="interactions" value="4276"/>
</dbReference>
<dbReference type="STRING" id="8364.ENSXETP00000012094"/>
<dbReference type="PaxDb" id="8364-ENSXETP00000033649"/>
<dbReference type="DNASU" id="448621"/>
<dbReference type="GeneID" id="448621"/>
<dbReference type="KEGG" id="xtr:448621"/>
<dbReference type="AGR" id="Xenbase:XB-GENE-491591"/>
<dbReference type="CTD" id="10285"/>
<dbReference type="Xenbase" id="XB-GENE-491591">
    <property type="gene designation" value="smndc1"/>
</dbReference>
<dbReference type="eggNOG" id="KOG3026">
    <property type="taxonomic scope" value="Eukaryota"/>
</dbReference>
<dbReference type="HOGENOM" id="CLU_069491_3_0_1"/>
<dbReference type="InParanoid" id="Q6DEY1"/>
<dbReference type="OMA" id="CMAVWSQ"/>
<dbReference type="OrthoDB" id="79171at2759"/>
<dbReference type="Reactome" id="R-XTR-72163">
    <property type="pathway name" value="mRNA Splicing - Major Pathway"/>
</dbReference>
<dbReference type="Proteomes" id="UP000008143">
    <property type="component" value="Chromosome 7"/>
</dbReference>
<dbReference type="GO" id="GO:0015030">
    <property type="term" value="C:Cajal body"/>
    <property type="evidence" value="ECO:0007669"/>
    <property type="project" value="UniProtKB-SubCell"/>
</dbReference>
<dbReference type="GO" id="GO:0005737">
    <property type="term" value="C:cytoplasm"/>
    <property type="evidence" value="ECO:0007669"/>
    <property type="project" value="InterPro"/>
</dbReference>
<dbReference type="GO" id="GO:0016607">
    <property type="term" value="C:nuclear speck"/>
    <property type="evidence" value="ECO:0007669"/>
    <property type="project" value="UniProtKB-SubCell"/>
</dbReference>
<dbReference type="GO" id="GO:0005681">
    <property type="term" value="C:spliceosomal complex"/>
    <property type="evidence" value="ECO:0007669"/>
    <property type="project" value="UniProtKB-KW"/>
</dbReference>
<dbReference type="GO" id="GO:0003723">
    <property type="term" value="F:RNA binding"/>
    <property type="evidence" value="ECO:0007669"/>
    <property type="project" value="InterPro"/>
</dbReference>
<dbReference type="GO" id="GO:0006397">
    <property type="term" value="P:mRNA processing"/>
    <property type="evidence" value="ECO:0007669"/>
    <property type="project" value="UniProtKB-KW"/>
</dbReference>
<dbReference type="GO" id="GO:0008380">
    <property type="term" value="P:RNA splicing"/>
    <property type="evidence" value="ECO:0007669"/>
    <property type="project" value="UniProtKB-KW"/>
</dbReference>
<dbReference type="CDD" id="cd20399">
    <property type="entry name" value="Tudor_SPF30"/>
    <property type="match status" value="1"/>
</dbReference>
<dbReference type="FunFam" id="2.30.30.140:FF:000038">
    <property type="entry name" value="Survival of motor neuron-related-splicing factor 30"/>
    <property type="match status" value="1"/>
</dbReference>
<dbReference type="Gene3D" id="2.30.30.140">
    <property type="match status" value="1"/>
</dbReference>
<dbReference type="InterPro" id="IPR010304">
    <property type="entry name" value="SMN_Tudor"/>
</dbReference>
<dbReference type="InterPro" id="IPR002999">
    <property type="entry name" value="Tudor"/>
</dbReference>
<dbReference type="PANTHER" id="PTHR13681:SF26">
    <property type="entry name" value="SURVIVAL OF MOTOR NEURON-RELATED-SPLICING FACTOR 30"/>
    <property type="match status" value="1"/>
</dbReference>
<dbReference type="PANTHER" id="PTHR13681">
    <property type="entry name" value="SURVIVAL OF MOTOR NEURON-RELATED-SPLICING FACTOR 30-RELATED"/>
    <property type="match status" value="1"/>
</dbReference>
<dbReference type="Pfam" id="PF06003">
    <property type="entry name" value="SMN_Tudor"/>
    <property type="match status" value="1"/>
</dbReference>
<dbReference type="SMART" id="SM00333">
    <property type="entry name" value="TUDOR"/>
    <property type="match status" value="1"/>
</dbReference>
<dbReference type="SUPFAM" id="SSF63748">
    <property type="entry name" value="Tudor/PWWP/MBT"/>
    <property type="match status" value="1"/>
</dbReference>
<dbReference type="PROSITE" id="PS50304">
    <property type="entry name" value="TUDOR"/>
    <property type="match status" value="1"/>
</dbReference>
<accession>Q6DEY1</accession>
<reference key="1">
    <citation type="submission" date="2006-10" db="EMBL/GenBank/DDBJ databases">
        <authorList>
            <consortium name="Sanger Xenopus tropicalis EST/cDNA project"/>
        </authorList>
    </citation>
    <scope>NUCLEOTIDE SEQUENCE [LARGE SCALE MRNA]</scope>
    <source>
        <tissue>Gastrula</tissue>
    </source>
</reference>
<reference key="2">
    <citation type="submission" date="2004-07" db="EMBL/GenBank/DDBJ databases">
        <authorList>
            <consortium name="NIH - Xenopus Gene Collection (XGC) project"/>
        </authorList>
    </citation>
    <scope>NUCLEOTIDE SEQUENCE [LARGE SCALE MRNA]</scope>
    <source>
        <tissue>Embryo</tissue>
    </source>
</reference>
<gene>
    <name type="primary">smndc1</name>
    <name type="synonym">spf30</name>
    <name type="ORF">TGas076b22.1</name>
</gene>
<protein>
    <recommendedName>
        <fullName>Survival of motor neuron-related-splicing factor 30</fullName>
    </recommendedName>
    <alternativeName>
        <fullName>Survival motor neuron domain-containing protein 1</fullName>
    </alternativeName>
</protein>
<comment type="function">
    <text evidence="1">Involved in spliceosome assembly (By similarity).</text>
</comment>
<comment type="subunit">
    <text evidence="1">Associates with spliceosomes.</text>
</comment>
<comment type="subcellular location">
    <subcellularLocation>
        <location evidence="1">Nucleus speckle</location>
    </subcellularLocation>
    <subcellularLocation>
        <location evidence="1">Nucleus</location>
        <location evidence="1">Cajal body</location>
    </subcellularLocation>
    <text evidence="1">Detected in nuclear speckles containing snRNP and in Cajal (coiled) bodies.</text>
</comment>
<comment type="domain">
    <text evidence="1">The Tudor domain mediates association with dimethylarginines, which are common in snRNP proteins.</text>
</comment>
<comment type="similarity">
    <text evidence="4">Belongs to the SMN family.</text>
</comment>
<feature type="chain" id="PRO_0000347226" description="Survival of motor neuron-related-splicing factor 30">
    <location>
        <begin position="1"/>
        <end position="238"/>
    </location>
</feature>
<feature type="domain" description="Tudor" evidence="3">
    <location>
        <begin position="72"/>
        <end position="132"/>
    </location>
</feature>
<feature type="short sequence motif" description="Nuclear localization signal" evidence="2">
    <location>
        <begin position="142"/>
        <end position="160"/>
    </location>
</feature>
<evidence type="ECO:0000250" key="1">
    <source>
        <dbReference type="UniProtKB" id="O75940"/>
    </source>
</evidence>
<evidence type="ECO:0000255" key="2"/>
<evidence type="ECO:0000255" key="3">
    <source>
        <dbReference type="PROSITE-ProRule" id="PRU00211"/>
    </source>
</evidence>
<evidence type="ECO:0000305" key="4"/>